<dbReference type="EMBL" id="AE001363">
    <property type="protein sequence ID" value="AAD18292.1"/>
    <property type="molecule type" value="Genomic_DNA"/>
</dbReference>
<dbReference type="EMBL" id="AE002161">
    <property type="protein sequence ID" value="AAF38448.1"/>
    <property type="molecule type" value="Genomic_DNA"/>
</dbReference>
<dbReference type="EMBL" id="BA000008">
    <property type="protein sequence ID" value="BAA98349.1"/>
    <property type="molecule type" value="Genomic_DNA"/>
</dbReference>
<dbReference type="EMBL" id="AE009440">
    <property type="protein sequence ID" value="AAP98073.1"/>
    <property type="molecule type" value="Genomic_DNA"/>
</dbReference>
<dbReference type="PIR" id="C86508">
    <property type="entry name" value="C86508"/>
</dbReference>
<dbReference type="PIR" id="H72114">
    <property type="entry name" value="H72114"/>
</dbReference>
<dbReference type="RefSeq" id="NP_224347.1">
    <property type="nucleotide sequence ID" value="NC_000922.1"/>
</dbReference>
<dbReference type="SMR" id="Q9Z944"/>
<dbReference type="STRING" id="406984.CPK_ORF00651"/>
<dbReference type="KEGG" id="cpa:CP_0633"/>
<dbReference type="KEGG" id="cpj:yqgE"/>
<dbReference type="KEGG" id="cpn:CPn_0139"/>
<dbReference type="KEGG" id="cpt:CpB0140"/>
<dbReference type="PATRIC" id="fig|115713.3.peg.156"/>
<dbReference type="eggNOG" id="COG1678">
    <property type="taxonomic scope" value="Bacteria"/>
</dbReference>
<dbReference type="HOGENOM" id="CLU_057596_2_1_0"/>
<dbReference type="OrthoDB" id="9807486at2"/>
<dbReference type="Proteomes" id="UP000000583">
    <property type="component" value="Chromosome"/>
</dbReference>
<dbReference type="Proteomes" id="UP000000801">
    <property type="component" value="Chromosome"/>
</dbReference>
<dbReference type="GO" id="GO:0005829">
    <property type="term" value="C:cytosol"/>
    <property type="evidence" value="ECO:0007669"/>
    <property type="project" value="TreeGrafter"/>
</dbReference>
<dbReference type="Gene3D" id="3.40.1740.10">
    <property type="entry name" value="VC0467-like"/>
    <property type="match status" value="1"/>
</dbReference>
<dbReference type="HAMAP" id="MF_00758">
    <property type="entry name" value="UPF0301"/>
    <property type="match status" value="1"/>
</dbReference>
<dbReference type="InterPro" id="IPR003774">
    <property type="entry name" value="AlgH-like"/>
</dbReference>
<dbReference type="NCBIfam" id="NF001271">
    <property type="entry name" value="PRK00228.2-3"/>
    <property type="match status" value="1"/>
</dbReference>
<dbReference type="PANTHER" id="PTHR30327">
    <property type="entry name" value="UNCHARACTERIZED PROTEIN YQGE"/>
    <property type="match status" value="1"/>
</dbReference>
<dbReference type="PANTHER" id="PTHR30327:SF1">
    <property type="entry name" value="UPF0301 PROTEIN YQGE"/>
    <property type="match status" value="1"/>
</dbReference>
<dbReference type="Pfam" id="PF02622">
    <property type="entry name" value="DUF179"/>
    <property type="match status" value="1"/>
</dbReference>
<dbReference type="SUPFAM" id="SSF143456">
    <property type="entry name" value="VC0467-like"/>
    <property type="match status" value="1"/>
</dbReference>
<proteinExistence type="inferred from homology"/>
<evidence type="ECO:0000255" key="1">
    <source>
        <dbReference type="HAMAP-Rule" id="MF_00758"/>
    </source>
</evidence>
<feature type="chain" id="PRO_0000214317" description="UPF0301 protein CPn_0139/CP_0633/CPj0139/CpB0140">
    <location>
        <begin position="1"/>
        <end position="188"/>
    </location>
</feature>
<reference key="1">
    <citation type="journal article" date="1999" name="Nat. Genet.">
        <title>Comparative genomes of Chlamydia pneumoniae and C. trachomatis.</title>
        <authorList>
            <person name="Kalman S."/>
            <person name="Mitchell W.P."/>
            <person name="Marathe R."/>
            <person name="Lammel C.J."/>
            <person name="Fan J."/>
            <person name="Hyman R.W."/>
            <person name="Olinger L."/>
            <person name="Grimwood J."/>
            <person name="Davis R.W."/>
            <person name="Stephens R.S."/>
        </authorList>
    </citation>
    <scope>NUCLEOTIDE SEQUENCE [LARGE SCALE GENOMIC DNA]</scope>
    <source>
        <strain>CWL029</strain>
    </source>
</reference>
<reference key="2">
    <citation type="journal article" date="2000" name="Nucleic Acids Res.">
        <title>Genome sequences of Chlamydia trachomatis MoPn and Chlamydia pneumoniae AR39.</title>
        <authorList>
            <person name="Read T.D."/>
            <person name="Brunham R.C."/>
            <person name="Shen C."/>
            <person name="Gill S.R."/>
            <person name="Heidelberg J.F."/>
            <person name="White O."/>
            <person name="Hickey E.K."/>
            <person name="Peterson J.D."/>
            <person name="Utterback T.R."/>
            <person name="Berry K.J."/>
            <person name="Bass S."/>
            <person name="Linher K.D."/>
            <person name="Weidman J.F."/>
            <person name="Khouri H.M."/>
            <person name="Craven B."/>
            <person name="Bowman C."/>
            <person name="Dodson R.J."/>
            <person name="Gwinn M.L."/>
            <person name="Nelson W.C."/>
            <person name="DeBoy R.T."/>
            <person name="Kolonay J.F."/>
            <person name="McClarty G."/>
            <person name="Salzberg S.L."/>
            <person name="Eisen J.A."/>
            <person name="Fraser C.M."/>
        </authorList>
    </citation>
    <scope>NUCLEOTIDE SEQUENCE [LARGE SCALE GENOMIC DNA]</scope>
    <source>
        <strain>AR39</strain>
    </source>
</reference>
<reference key="3">
    <citation type="journal article" date="2000" name="Nucleic Acids Res.">
        <title>Comparison of whole genome sequences of Chlamydia pneumoniae J138 from Japan and CWL029 from USA.</title>
        <authorList>
            <person name="Shirai M."/>
            <person name="Hirakawa H."/>
            <person name="Kimoto M."/>
            <person name="Tabuchi M."/>
            <person name="Kishi F."/>
            <person name="Ouchi K."/>
            <person name="Shiba T."/>
            <person name="Ishii K."/>
            <person name="Hattori M."/>
            <person name="Kuhara S."/>
            <person name="Nakazawa T."/>
        </authorList>
    </citation>
    <scope>NUCLEOTIDE SEQUENCE [LARGE SCALE GENOMIC DNA]</scope>
    <source>
        <strain>J138</strain>
    </source>
</reference>
<reference key="4">
    <citation type="submission" date="2002-05" db="EMBL/GenBank/DDBJ databases">
        <title>The genome sequence of Chlamydia pneumoniae TW183 and comparison with other Chlamydia strains based on whole genome sequence analysis.</title>
        <authorList>
            <person name="Geng M.M."/>
            <person name="Schuhmacher A."/>
            <person name="Muehldorfer I."/>
            <person name="Bensch K.W."/>
            <person name="Schaefer K.P."/>
            <person name="Schneider S."/>
            <person name="Pohl T."/>
            <person name="Essig A."/>
            <person name="Marre R."/>
            <person name="Melchers K."/>
        </authorList>
    </citation>
    <scope>NUCLEOTIDE SEQUENCE [LARGE SCALE GENOMIC DNA]</scope>
    <source>
        <strain>TW-183</strain>
    </source>
</reference>
<protein>
    <recommendedName>
        <fullName evidence="1">UPF0301 protein CPn_0139/CP_0633/CPj0139/CpB0140</fullName>
    </recommendedName>
</protein>
<comment type="similarity">
    <text evidence="1">Belongs to the UPF0301 (AlgH) family.</text>
</comment>
<gene>
    <name type="ordered locus">CPn_0139</name>
    <name type="ordered locus">CP_0633</name>
    <name type="ordered locus">CPj0139</name>
    <name type="ordered locus">CpB0140</name>
</gene>
<organism>
    <name type="scientific">Chlamydia pneumoniae</name>
    <name type="common">Chlamydophila pneumoniae</name>
    <dbReference type="NCBI Taxonomy" id="83558"/>
    <lineage>
        <taxon>Bacteria</taxon>
        <taxon>Pseudomonadati</taxon>
        <taxon>Chlamydiota</taxon>
        <taxon>Chlamydiia</taxon>
        <taxon>Chlamydiales</taxon>
        <taxon>Chlamydiaceae</taxon>
        <taxon>Chlamydia/Chlamydophila group</taxon>
        <taxon>Chlamydia</taxon>
    </lineage>
</organism>
<name>Y139_CHLPN</name>
<accession>Q9Z944</accession>
<sequence>MKIPYARLEKGSLLVASPDINQGVFARSVILLCEHSLNGSFGLILNKTLGFEISDDIFTFEKVSNHNIRFCMGGPLQANQMMLLHSCSEIPEQTLEICPSVYLGGDLPFLQEIASSESGPEINLCFGYSGWQAGQLEKEFLSNDWFLAPGNKDYVFYSEPEDLWALVLKDLGGKYASLSTVPDNLLLN</sequence>